<comment type="similarity">
    <text evidence="1">Belongs to the UPF0434 family.</text>
</comment>
<feature type="chain" id="PRO_1000065831" description="UPF0434 protein BMA10247_2152">
    <location>
        <begin position="1"/>
        <end position="68"/>
    </location>
</feature>
<organism>
    <name type="scientific">Burkholderia mallei (strain NCTC 10247)</name>
    <dbReference type="NCBI Taxonomy" id="320389"/>
    <lineage>
        <taxon>Bacteria</taxon>
        <taxon>Pseudomonadati</taxon>
        <taxon>Pseudomonadota</taxon>
        <taxon>Betaproteobacteria</taxon>
        <taxon>Burkholderiales</taxon>
        <taxon>Burkholderiaceae</taxon>
        <taxon>Burkholderia</taxon>
        <taxon>pseudomallei group</taxon>
    </lineage>
</organism>
<protein>
    <recommendedName>
        <fullName evidence="1">UPF0434 protein BMA10247_2152</fullName>
    </recommendedName>
</protein>
<accession>A3MN46</accession>
<dbReference type="EMBL" id="CP000548">
    <property type="protein sequence ID" value="ABO05575.1"/>
    <property type="molecule type" value="Genomic_DNA"/>
</dbReference>
<dbReference type="RefSeq" id="WP_004196455.1">
    <property type="nucleotide sequence ID" value="NZ_CP007802.1"/>
</dbReference>
<dbReference type="SMR" id="A3MN46"/>
<dbReference type="KEGG" id="bmaz:BM44_1088"/>
<dbReference type="KEGG" id="bmn:BMA10247_2152"/>
<dbReference type="PATRIC" id="fig|320389.8.peg.1213"/>
<dbReference type="GO" id="GO:0005829">
    <property type="term" value="C:cytosol"/>
    <property type="evidence" value="ECO:0007669"/>
    <property type="project" value="TreeGrafter"/>
</dbReference>
<dbReference type="FunFam" id="2.20.25.10:FF:000002">
    <property type="entry name" value="UPF0434 protein YcaR"/>
    <property type="match status" value="1"/>
</dbReference>
<dbReference type="Gene3D" id="2.20.25.10">
    <property type="match status" value="1"/>
</dbReference>
<dbReference type="HAMAP" id="MF_01187">
    <property type="entry name" value="UPF0434"/>
    <property type="match status" value="1"/>
</dbReference>
<dbReference type="InterPro" id="IPR005651">
    <property type="entry name" value="Trm112-like"/>
</dbReference>
<dbReference type="NCBIfam" id="TIGR01053">
    <property type="entry name" value="LSD1"/>
    <property type="match status" value="1"/>
</dbReference>
<dbReference type="PANTHER" id="PTHR33505:SF4">
    <property type="entry name" value="PROTEIN PREY, MITOCHONDRIAL"/>
    <property type="match status" value="1"/>
</dbReference>
<dbReference type="PANTHER" id="PTHR33505">
    <property type="entry name" value="ZGC:162634"/>
    <property type="match status" value="1"/>
</dbReference>
<dbReference type="Pfam" id="PF03966">
    <property type="entry name" value="Trm112p"/>
    <property type="match status" value="1"/>
</dbReference>
<dbReference type="SUPFAM" id="SSF158997">
    <property type="entry name" value="Trm112p-like"/>
    <property type="match status" value="1"/>
</dbReference>
<proteinExistence type="inferred from homology"/>
<evidence type="ECO:0000255" key="1">
    <source>
        <dbReference type="HAMAP-Rule" id="MF_01187"/>
    </source>
</evidence>
<gene>
    <name type="ordered locus">BMA10247_2152</name>
</gene>
<name>Y4652_BURM7</name>
<sequence>MDARLLEILVCPICKGPLHYDRGAQELVCHADKLAYPIRDGIPVMLVDEARQTVEGTPVDPAGPARGR</sequence>
<reference key="1">
    <citation type="journal article" date="2010" name="Genome Biol. Evol.">
        <title>Continuing evolution of Burkholderia mallei through genome reduction and large-scale rearrangements.</title>
        <authorList>
            <person name="Losada L."/>
            <person name="Ronning C.M."/>
            <person name="DeShazer D."/>
            <person name="Woods D."/>
            <person name="Fedorova N."/>
            <person name="Kim H.S."/>
            <person name="Shabalina S.A."/>
            <person name="Pearson T.R."/>
            <person name="Brinkac L."/>
            <person name="Tan P."/>
            <person name="Nandi T."/>
            <person name="Crabtree J."/>
            <person name="Badger J."/>
            <person name="Beckstrom-Sternberg S."/>
            <person name="Saqib M."/>
            <person name="Schutzer S.E."/>
            <person name="Keim P."/>
            <person name="Nierman W.C."/>
        </authorList>
    </citation>
    <scope>NUCLEOTIDE SEQUENCE [LARGE SCALE GENOMIC DNA]</scope>
    <source>
        <strain>NCTC 10247</strain>
    </source>
</reference>